<protein>
    <recommendedName>
        <fullName evidence="4">Transcription factor MYB87</fullName>
    </recommendedName>
    <alternativeName>
        <fullName evidence="4">Myb-related protein 87</fullName>
        <shortName evidence="6">AtMYB87</shortName>
    </alternativeName>
</protein>
<reference key="1">
    <citation type="journal article" date="1999" name="Nature">
        <title>Sequence and analysis of chromosome 4 of the plant Arabidopsis thaliana.</title>
        <authorList>
            <person name="Mayer K.F.X."/>
            <person name="Schueller C."/>
            <person name="Wambutt R."/>
            <person name="Murphy G."/>
            <person name="Volckaert G."/>
            <person name="Pohl T."/>
            <person name="Duesterhoeft A."/>
            <person name="Stiekema W."/>
            <person name="Entian K.-D."/>
            <person name="Terryn N."/>
            <person name="Harris B."/>
            <person name="Ansorge W."/>
            <person name="Brandt P."/>
            <person name="Grivell L.A."/>
            <person name="Rieger M."/>
            <person name="Weichselgartner M."/>
            <person name="de Simone V."/>
            <person name="Obermaier B."/>
            <person name="Mache R."/>
            <person name="Mueller M."/>
            <person name="Kreis M."/>
            <person name="Delseny M."/>
            <person name="Puigdomenech P."/>
            <person name="Watson M."/>
            <person name="Schmidtheini T."/>
            <person name="Reichert B."/>
            <person name="Portetelle D."/>
            <person name="Perez-Alonso M."/>
            <person name="Boutry M."/>
            <person name="Bancroft I."/>
            <person name="Vos P."/>
            <person name="Hoheisel J."/>
            <person name="Zimmermann W."/>
            <person name="Wedler H."/>
            <person name="Ridley P."/>
            <person name="Langham S.-A."/>
            <person name="McCullagh B."/>
            <person name="Bilham L."/>
            <person name="Robben J."/>
            <person name="van der Schueren J."/>
            <person name="Grymonprez B."/>
            <person name="Chuang Y.-J."/>
            <person name="Vandenbussche F."/>
            <person name="Braeken M."/>
            <person name="Weltjens I."/>
            <person name="Voet M."/>
            <person name="Bastiaens I."/>
            <person name="Aert R."/>
            <person name="Defoor E."/>
            <person name="Weitzenegger T."/>
            <person name="Bothe G."/>
            <person name="Ramsperger U."/>
            <person name="Hilbert H."/>
            <person name="Braun M."/>
            <person name="Holzer E."/>
            <person name="Brandt A."/>
            <person name="Peters S."/>
            <person name="van Staveren M."/>
            <person name="Dirkse W."/>
            <person name="Mooijman P."/>
            <person name="Klein Lankhorst R."/>
            <person name="Rose M."/>
            <person name="Hauf J."/>
            <person name="Koetter P."/>
            <person name="Berneiser S."/>
            <person name="Hempel S."/>
            <person name="Feldpausch M."/>
            <person name="Lamberth S."/>
            <person name="Van den Daele H."/>
            <person name="De Keyser A."/>
            <person name="Buysshaert C."/>
            <person name="Gielen J."/>
            <person name="Villarroel R."/>
            <person name="De Clercq R."/>
            <person name="van Montagu M."/>
            <person name="Rogers J."/>
            <person name="Cronin A."/>
            <person name="Quail M.A."/>
            <person name="Bray-Allen S."/>
            <person name="Clark L."/>
            <person name="Doggett J."/>
            <person name="Hall S."/>
            <person name="Kay M."/>
            <person name="Lennard N."/>
            <person name="McLay K."/>
            <person name="Mayes R."/>
            <person name="Pettett A."/>
            <person name="Rajandream M.A."/>
            <person name="Lyne M."/>
            <person name="Benes V."/>
            <person name="Rechmann S."/>
            <person name="Borkova D."/>
            <person name="Bloecker H."/>
            <person name="Scharfe M."/>
            <person name="Grimm M."/>
            <person name="Loehnert T.-H."/>
            <person name="Dose S."/>
            <person name="de Haan M."/>
            <person name="Maarse A.C."/>
            <person name="Schaefer M."/>
            <person name="Mueller-Auer S."/>
            <person name="Gabel C."/>
            <person name="Fuchs M."/>
            <person name="Fartmann B."/>
            <person name="Granderath K."/>
            <person name="Dauner D."/>
            <person name="Herzl A."/>
            <person name="Neumann S."/>
            <person name="Argiriou A."/>
            <person name="Vitale D."/>
            <person name="Liguori R."/>
            <person name="Piravandi E."/>
            <person name="Massenet O."/>
            <person name="Quigley F."/>
            <person name="Clabauld G."/>
            <person name="Muendlein A."/>
            <person name="Felber R."/>
            <person name="Schnabl S."/>
            <person name="Hiller R."/>
            <person name="Schmidt W."/>
            <person name="Lecharny A."/>
            <person name="Aubourg S."/>
            <person name="Chefdor F."/>
            <person name="Cooke R."/>
            <person name="Berger C."/>
            <person name="Monfort A."/>
            <person name="Casacuberta E."/>
            <person name="Gibbons T."/>
            <person name="Weber N."/>
            <person name="Vandenbol M."/>
            <person name="Bargues M."/>
            <person name="Terol J."/>
            <person name="Torres A."/>
            <person name="Perez-Perez A."/>
            <person name="Purnelle B."/>
            <person name="Bent E."/>
            <person name="Johnson S."/>
            <person name="Tacon D."/>
            <person name="Jesse T."/>
            <person name="Heijnen L."/>
            <person name="Schwarz S."/>
            <person name="Scholler P."/>
            <person name="Heber S."/>
            <person name="Francs P."/>
            <person name="Bielke C."/>
            <person name="Frishman D."/>
            <person name="Haase D."/>
            <person name="Lemcke K."/>
            <person name="Mewes H.-W."/>
            <person name="Stocker S."/>
            <person name="Zaccaria P."/>
            <person name="Bevan M."/>
            <person name="Wilson R.K."/>
            <person name="de la Bastide M."/>
            <person name="Habermann K."/>
            <person name="Parnell L."/>
            <person name="Dedhia N."/>
            <person name="Gnoj L."/>
            <person name="Schutz K."/>
            <person name="Huang E."/>
            <person name="Spiegel L."/>
            <person name="Sekhon M."/>
            <person name="Murray J."/>
            <person name="Sheet P."/>
            <person name="Cordes M."/>
            <person name="Abu-Threideh J."/>
            <person name="Stoneking T."/>
            <person name="Kalicki J."/>
            <person name="Graves T."/>
            <person name="Harmon G."/>
            <person name="Edwards J."/>
            <person name="Latreille P."/>
            <person name="Courtney L."/>
            <person name="Cloud J."/>
            <person name="Abbott A."/>
            <person name="Scott K."/>
            <person name="Johnson D."/>
            <person name="Minx P."/>
            <person name="Bentley D."/>
            <person name="Fulton B."/>
            <person name="Miller N."/>
            <person name="Greco T."/>
            <person name="Kemp K."/>
            <person name="Kramer J."/>
            <person name="Fulton L."/>
            <person name="Mardis E."/>
            <person name="Dante M."/>
            <person name="Pepin K."/>
            <person name="Hillier L.W."/>
            <person name="Nelson J."/>
            <person name="Spieth J."/>
            <person name="Ryan E."/>
            <person name="Andrews S."/>
            <person name="Geisel C."/>
            <person name="Layman D."/>
            <person name="Du H."/>
            <person name="Ali J."/>
            <person name="Berghoff A."/>
            <person name="Jones K."/>
            <person name="Drone K."/>
            <person name="Cotton M."/>
            <person name="Joshu C."/>
            <person name="Antonoiu B."/>
            <person name="Zidanic M."/>
            <person name="Strong C."/>
            <person name="Sun H."/>
            <person name="Lamar B."/>
            <person name="Yordan C."/>
            <person name="Ma P."/>
            <person name="Zhong J."/>
            <person name="Preston R."/>
            <person name="Vil D."/>
            <person name="Shekher M."/>
            <person name="Matero A."/>
            <person name="Shah R."/>
            <person name="Swaby I.K."/>
            <person name="O'Shaughnessy A."/>
            <person name="Rodriguez M."/>
            <person name="Hoffman J."/>
            <person name="Till S."/>
            <person name="Granat S."/>
            <person name="Shohdy N."/>
            <person name="Hasegawa A."/>
            <person name="Hameed A."/>
            <person name="Lodhi M."/>
            <person name="Johnson A."/>
            <person name="Chen E."/>
            <person name="Marra M.A."/>
            <person name="Martienssen R."/>
            <person name="McCombie W.R."/>
        </authorList>
    </citation>
    <scope>NUCLEOTIDE SEQUENCE [LARGE SCALE GENOMIC DNA]</scope>
    <source>
        <strain>cv. Columbia</strain>
    </source>
</reference>
<reference key="2">
    <citation type="journal article" date="2017" name="Plant J.">
        <title>Araport11: a complete reannotation of the Arabidopsis thaliana reference genome.</title>
        <authorList>
            <person name="Cheng C.Y."/>
            <person name="Krishnakumar V."/>
            <person name="Chan A.P."/>
            <person name="Thibaud-Nissen F."/>
            <person name="Schobel S."/>
            <person name="Town C.D."/>
        </authorList>
    </citation>
    <scope>GENOME REANNOTATION</scope>
    <source>
        <strain>cv. Columbia</strain>
    </source>
</reference>
<reference key="3">
    <citation type="submission" date="2004-01" db="EMBL/GenBank/DDBJ databases">
        <title>The MYB transcription factor family in Arabidopsis: a genome-wide cloning and expression pattern analysis.</title>
        <authorList>
            <person name="Qu L."/>
            <person name="Gu H."/>
        </authorList>
    </citation>
    <scope>NUCLEOTIDE SEQUENCE [MRNA] OF 10-305</scope>
</reference>
<reference key="4">
    <citation type="journal article" date="2006" name="Plant Biotechnol. J.">
        <title>Simultaneous high-throughput recombinational cloning of open reading frames in closed and open configurations.</title>
        <authorList>
            <person name="Underwood B.A."/>
            <person name="Vanderhaeghen R."/>
            <person name="Whitford R."/>
            <person name="Town C.D."/>
            <person name="Hilson P."/>
        </authorList>
    </citation>
    <scope>NUCLEOTIDE SEQUENCE [LARGE SCALE MRNA] OF 10-305</scope>
    <source>
        <strain>cv. Columbia</strain>
    </source>
</reference>
<reference key="5">
    <citation type="journal article" date="1998" name="Plant J.">
        <title>Towards functional characterisation of the members of the R2R3-MYB gene family from Arabidopsis thaliana.</title>
        <authorList>
            <person name="Kranz H.D."/>
            <person name="Denekamp M."/>
            <person name="Greco R."/>
            <person name="Jin H.-L."/>
            <person name="Leyva A."/>
            <person name="Meissner R.C."/>
            <person name="Petroni K."/>
            <person name="Urzainqui A."/>
            <person name="Bevan M."/>
            <person name="Martin C."/>
            <person name="Smeekens S."/>
            <person name="Tonelli C."/>
            <person name="Paz-Ares J."/>
            <person name="Weisshaar B."/>
        </authorList>
    </citation>
    <scope>NUCLEOTIDE SEQUENCE [MRNA] OF 55-305</scope>
    <source>
        <strain>cv. Columbia</strain>
    </source>
</reference>
<reference key="6">
    <citation type="submission" date="1997-05" db="EMBL/GenBank/DDBJ databases">
        <title>One hundred R2R3-MYB genes in the genome of Arabidopsis thaliana.</title>
        <authorList>
            <person name="Romero I."/>
            <person name="Fuertes A."/>
            <person name="Benito M.J."/>
            <person name="Malpica J."/>
            <person name="Leyva A."/>
            <person name="Paz-Ares J."/>
        </authorList>
    </citation>
    <scope>NUCLEOTIDE SEQUENCE [MRNA] OF 56-100</scope>
    <source>
        <strain>cv. Landsberg erecta</strain>
    </source>
</reference>
<reference key="7">
    <citation type="journal article" date="2006" name="Plant Cell">
        <title>Blind homologous R2R3 Myb genes control the pattern of lateral meristem initiation in Arabidopsis.</title>
        <authorList>
            <person name="Mueller D."/>
            <person name="Schmitz G."/>
            <person name="Theres K."/>
        </authorList>
    </citation>
    <scope>TISSUE SPECIFICITY</scope>
</reference>
<reference key="8">
    <citation type="journal article" date="2014" name="Biotechnol. Lett.">
        <title>Chimeric repressor analysis identifies MYB87 as a possible regulator of morphogenesis via cell wall organization and remodeling in Arabidopsis.</title>
        <authorList>
            <person name="Fujiwara S."/>
            <person name="Mitsuda N."/>
            <person name="Nakai Y."/>
            <person name="Kigoshi K."/>
            <person name="Suzuki K."/>
            <person name="Ohme-Takagi M."/>
        </authorList>
    </citation>
    <scope>FUNCTION</scope>
</reference>
<organism>
    <name type="scientific">Arabidopsis thaliana</name>
    <name type="common">Mouse-ear cress</name>
    <dbReference type="NCBI Taxonomy" id="3702"/>
    <lineage>
        <taxon>Eukaryota</taxon>
        <taxon>Viridiplantae</taxon>
        <taxon>Streptophyta</taxon>
        <taxon>Embryophyta</taxon>
        <taxon>Tracheophyta</taxon>
        <taxon>Spermatophyta</taxon>
        <taxon>Magnoliopsida</taxon>
        <taxon>eudicotyledons</taxon>
        <taxon>Gunneridae</taxon>
        <taxon>Pentapetalae</taxon>
        <taxon>rosids</taxon>
        <taxon>malvids</taxon>
        <taxon>Brassicales</taxon>
        <taxon>Brassicaceae</taxon>
        <taxon>Camelineae</taxon>
        <taxon>Arabidopsis</taxon>
    </lineage>
</organism>
<dbReference type="EMBL" id="AL035709">
    <property type="protein sequence ID" value="CAB38926.1"/>
    <property type="status" value="ALT_INIT"/>
    <property type="molecule type" value="Genomic_DNA"/>
</dbReference>
<dbReference type="EMBL" id="AL161592">
    <property type="protein sequence ID" value="CAB80443.1"/>
    <property type="status" value="ALT_INIT"/>
    <property type="molecule type" value="Genomic_DNA"/>
</dbReference>
<dbReference type="EMBL" id="CP002687">
    <property type="protein sequence ID" value="AEE86837.1"/>
    <property type="molecule type" value="Genomic_DNA"/>
</dbReference>
<dbReference type="EMBL" id="AY519614">
    <property type="protein sequence ID" value="AAS10084.1"/>
    <property type="molecule type" value="mRNA"/>
</dbReference>
<dbReference type="EMBL" id="DQ446905">
    <property type="protein sequence ID" value="ABE66119.1"/>
    <property type="molecule type" value="mRNA"/>
</dbReference>
<dbReference type="EMBL" id="DQ653253">
    <property type="protein sequence ID" value="ABK28671.1"/>
    <property type="status" value="ALT_SEQ"/>
    <property type="molecule type" value="mRNA"/>
</dbReference>
<dbReference type="EMBL" id="AF062914">
    <property type="protein sequence ID" value="AAC83636.1"/>
    <property type="status" value="ALT_FRAME"/>
    <property type="molecule type" value="mRNA"/>
</dbReference>
<dbReference type="EMBL" id="Z95809">
    <property type="protein sequence ID" value="CAB09241.1"/>
    <property type="molecule type" value="mRNA"/>
</dbReference>
<dbReference type="PIR" id="T06025">
    <property type="entry name" value="T06025"/>
</dbReference>
<dbReference type="PIR" id="T51686">
    <property type="entry name" value="T51686"/>
</dbReference>
<dbReference type="RefSeq" id="NP_195492.2">
    <property type="nucleotide sequence ID" value="NM_119940.5"/>
</dbReference>
<dbReference type="SMR" id="F4JSU0"/>
<dbReference type="IntAct" id="F4JSU0">
    <property type="interactions" value="8"/>
</dbReference>
<dbReference type="STRING" id="3702.F4JSU0"/>
<dbReference type="PaxDb" id="3702-AT4G37780.1"/>
<dbReference type="EnsemblPlants" id="AT4G37780.1">
    <property type="protein sequence ID" value="AT4G37780.1"/>
    <property type="gene ID" value="AT4G37780"/>
</dbReference>
<dbReference type="GeneID" id="829934"/>
<dbReference type="Gramene" id="AT4G37780.1">
    <property type="protein sequence ID" value="AT4G37780.1"/>
    <property type="gene ID" value="AT4G37780"/>
</dbReference>
<dbReference type="KEGG" id="ath:AT4G37780"/>
<dbReference type="Araport" id="AT4G37780"/>
<dbReference type="TAIR" id="AT4G37780">
    <property type="gene designation" value="MYB87"/>
</dbReference>
<dbReference type="eggNOG" id="KOG0048">
    <property type="taxonomic scope" value="Eukaryota"/>
</dbReference>
<dbReference type="HOGENOM" id="CLU_028567_6_2_1"/>
<dbReference type="InParanoid" id="F4JSU0"/>
<dbReference type="OMA" id="NNNYLDH"/>
<dbReference type="PRO" id="PR:F4JSU0"/>
<dbReference type="Proteomes" id="UP000006548">
    <property type="component" value="Chromosome 4"/>
</dbReference>
<dbReference type="ExpressionAtlas" id="F4JSU0">
    <property type="expression patterns" value="baseline and differential"/>
</dbReference>
<dbReference type="GO" id="GO:0005634">
    <property type="term" value="C:nucleus"/>
    <property type="evidence" value="ECO:0007669"/>
    <property type="project" value="UniProtKB-SubCell"/>
</dbReference>
<dbReference type="GO" id="GO:0003677">
    <property type="term" value="F:DNA binding"/>
    <property type="evidence" value="ECO:0007669"/>
    <property type="project" value="UniProtKB-KW"/>
</dbReference>
<dbReference type="GO" id="GO:0003700">
    <property type="term" value="F:DNA-binding transcription factor activity"/>
    <property type="evidence" value="ECO:0000250"/>
    <property type="project" value="TAIR"/>
</dbReference>
<dbReference type="GO" id="GO:0009664">
    <property type="term" value="P:plant-type cell wall organization"/>
    <property type="evidence" value="ECO:0000315"/>
    <property type="project" value="UniProtKB"/>
</dbReference>
<dbReference type="CDD" id="cd00167">
    <property type="entry name" value="SANT"/>
    <property type="match status" value="2"/>
</dbReference>
<dbReference type="FunFam" id="1.10.10.60:FF:000015">
    <property type="entry name" value="Transcription factor RAX3"/>
    <property type="match status" value="1"/>
</dbReference>
<dbReference type="Gene3D" id="1.10.10.60">
    <property type="entry name" value="Homeodomain-like"/>
    <property type="match status" value="2"/>
</dbReference>
<dbReference type="InterPro" id="IPR009057">
    <property type="entry name" value="Homeodomain-like_sf"/>
</dbReference>
<dbReference type="InterPro" id="IPR017930">
    <property type="entry name" value="Myb_dom"/>
</dbReference>
<dbReference type="InterPro" id="IPR001005">
    <property type="entry name" value="SANT/Myb"/>
</dbReference>
<dbReference type="PANTHER" id="PTHR48000">
    <property type="entry name" value="OS09G0431300 PROTEIN"/>
    <property type="match status" value="1"/>
</dbReference>
<dbReference type="PANTHER" id="PTHR48000:SF75">
    <property type="entry name" value="TRANSCRIPTION FACTOR MYB87"/>
    <property type="match status" value="1"/>
</dbReference>
<dbReference type="Pfam" id="PF00249">
    <property type="entry name" value="Myb_DNA-binding"/>
    <property type="match status" value="2"/>
</dbReference>
<dbReference type="SMART" id="SM00717">
    <property type="entry name" value="SANT"/>
    <property type="match status" value="2"/>
</dbReference>
<dbReference type="SUPFAM" id="SSF46689">
    <property type="entry name" value="Homeodomain-like"/>
    <property type="match status" value="1"/>
</dbReference>
<dbReference type="PROSITE" id="PS51294">
    <property type="entry name" value="HTH_MYB"/>
    <property type="match status" value="2"/>
</dbReference>
<feature type="chain" id="PRO_0000439655" description="Transcription factor MYB87">
    <location>
        <begin position="1"/>
        <end position="305"/>
    </location>
</feature>
<feature type="domain" description="HTH myb-type 1" evidence="1">
    <location>
        <begin position="9"/>
        <end position="66"/>
    </location>
</feature>
<feature type="domain" description="HTH myb-type 2" evidence="1">
    <location>
        <begin position="67"/>
        <end position="117"/>
    </location>
</feature>
<feature type="DNA-binding region" description="H-T-H motif" evidence="1">
    <location>
        <begin position="38"/>
        <end position="62"/>
    </location>
</feature>
<feature type="DNA-binding region" description="H-T-H motif" evidence="1">
    <location>
        <begin position="90"/>
        <end position="113"/>
    </location>
</feature>
<feature type="sequence conflict" description="In Ref. 5; AAC83636." evidence="4" ref="5">
    <original>L</original>
    <variation>S</variation>
    <location>
        <position position="197"/>
    </location>
</feature>
<comment type="function">
    <text evidence="3">Transcription factor that functions as a regulator of genes affecting cell wall organization and remodeling. Activates genes related to the primary cell wall and represses genes related to the secondary cell wall and expansins. Required for the regulation of longitudinal cell growth in stems, leaves, petioles, roots, flowers and siliques.</text>
</comment>
<comment type="subcellular location">
    <subcellularLocation>
        <location evidence="1">Nucleus</location>
    </subcellularLocation>
</comment>
<comment type="tissue specificity">
    <text evidence="2">Expressed in roots, leaves, internodes, shoot tips and flowers.</text>
</comment>
<comment type="sequence caution" evidence="4">
    <conflict type="frameshift">
        <sequence resource="EMBL-CDS" id="AAC83636"/>
    </conflict>
</comment>
<comment type="sequence caution" evidence="4">
    <conflict type="erroneous termination">
        <sequence resource="EMBL-CDS" id="ABK28671"/>
    </conflict>
    <text>Extended C-terminus.</text>
</comment>
<comment type="sequence caution" evidence="4">
    <conflict type="erroneous initiation">
        <sequence resource="EMBL-CDS" id="CAB38926"/>
    </conflict>
    <text>Truncated N-terminus.</text>
</comment>
<comment type="sequence caution" evidence="4">
    <conflict type="erroneous initiation">
        <sequence resource="EMBL-CDS" id="CAB80443"/>
    </conflict>
    <text>Truncated N-terminus.</text>
</comment>
<evidence type="ECO:0000255" key="1">
    <source>
        <dbReference type="PROSITE-ProRule" id="PRU00625"/>
    </source>
</evidence>
<evidence type="ECO:0000269" key="2">
    <source>
    </source>
</evidence>
<evidence type="ECO:0000269" key="3">
    <source>
    </source>
</evidence>
<evidence type="ECO:0000305" key="4"/>
<evidence type="ECO:0000312" key="5">
    <source>
        <dbReference type="Araport" id="AT4G37780"/>
    </source>
</evidence>
<evidence type="ECO:0000312" key="6">
    <source>
        <dbReference type="EMBL" id="CAB09241.1"/>
    </source>
</evidence>
<accession>F4JSU0</accession>
<accession>A0MFC7</accession>
<accession>O49806</accession>
<accession>Q7DLH1</accession>
<accession>Q9T066</accession>
<gene>
    <name evidence="6" type="primary">MYB87</name>
    <name evidence="5" type="ordered locus">At4g37780</name>
</gene>
<keyword id="KW-0010">Activator</keyword>
<keyword id="KW-0217">Developmental protein</keyword>
<keyword id="KW-0238">DNA-binding</keyword>
<keyword id="KW-0539">Nucleus</keyword>
<keyword id="KW-1185">Reference proteome</keyword>
<keyword id="KW-0677">Repeat</keyword>
<keyword id="KW-0678">Repressor</keyword>
<keyword id="KW-0804">Transcription</keyword>
<keyword id="KW-0805">Transcription regulation</keyword>
<name>MYB87_ARATH</name>
<proteinExistence type="evidence at transcript level"/>
<sequence>MGRAPCCDKMAVKKGPWSTEEDAVLKSYIEKHGTGNNWISLPQRIGIKRCGKSCRLRWLNYLRPNLKHGGFTDEEDYIICSLYITIGSRWSIIASQLPGRTDNDIKNYWNTRLKKKLLSKQGKAFHQQLNVKFERGTTSSSSSQNQIQIFHDENTKSNQTLYNQVVDPSMRAFAMEEQSMIKNQILEPFSWEPNKVLFDVDYDAAASSYHHHASPSLNSMSSTSSIGTNNSSLQMSHYTVNHNDHDQPDMFFMDGFENFQAELFDEIANNNTVENGFDGTEILINNNYLDHDISSFIDYPLYDNE</sequence>